<evidence type="ECO:0000250" key="1"/>
<evidence type="ECO:0000255" key="2">
    <source>
        <dbReference type="PROSITE-ProRule" id="PRU00108"/>
    </source>
</evidence>
<evidence type="ECO:0000256" key="3">
    <source>
        <dbReference type="SAM" id="MobiDB-lite"/>
    </source>
</evidence>
<evidence type="ECO:0000269" key="4">
    <source>
    </source>
</evidence>
<evidence type="ECO:0000305" key="5"/>
<keyword id="KW-0217">Developmental protein</keyword>
<keyword id="KW-0238">DNA-binding</keyword>
<keyword id="KW-0371">Homeobox</keyword>
<keyword id="KW-0539">Nucleus</keyword>
<keyword id="KW-1185">Reference proteome</keyword>
<keyword id="KW-0804">Transcription</keyword>
<keyword id="KW-0805">Transcription regulation</keyword>
<proteinExistence type="evidence at transcript level"/>
<dbReference type="EMBL" id="AL645798">
    <property type="protein sequence ID" value="CAD44456.1"/>
    <property type="molecule type" value="Genomic_DNA"/>
</dbReference>
<dbReference type="EMBL" id="DQ060549">
    <property type="protein sequence ID" value="AAY67927.1"/>
    <property type="molecule type" value="mRNA"/>
</dbReference>
<dbReference type="EMBL" id="AF071255">
    <property type="protein sequence ID" value="AAD15948.1"/>
    <property type="molecule type" value="Genomic_DNA"/>
</dbReference>
<dbReference type="EMBL" id="Y14534">
    <property type="protein sequence ID" value="CAA74869.1"/>
    <property type="molecule type" value="mRNA"/>
</dbReference>
<dbReference type="RefSeq" id="NP_571256.1">
    <property type="nucleotide sequence ID" value="NM_131181.1"/>
</dbReference>
<dbReference type="SMR" id="Q8JH55"/>
<dbReference type="FunCoup" id="Q8JH55">
    <property type="interactions" value="9"/>
</dbReference>
<dbReference type="STRING" id="7955.ENSDARP00000070632"/>
<dbReference type="PaxDb" id="7955-ENSDARP00000070632"/>
<dbReference type="Ensembl" id="ENSDART00000076154">
    <property type="protein sequence ID" value="ENSDARP00000070632"/>
    <property type="gene ID" value="ENSDARG00000054025"/>
</dbReference>
<dbReference type="Ensembl" id="ENSDART00000189568">
    <property type="protein sequence ID" value="ENSDARP00000148023"/>
    <property type="gene ID" value="ENSDARG00000111056"/>
</dbReference>
<dbReference type="GeneID" id="30420"/>
<dbReference type="KEGG" id="dre:30420"/>
<dbReference type="AGR" id="ZFIN:ZDB-GENE-980526-291"/>
<dbReference type="CTD" id="30420"/>
<dbReference type="ZFIN" id="ZDB-GENE-980526-291">
    <property type="gene designation" value="hoxb8b"/>
</dbReference>
<dbReference type="eggNOG" id="KOG0489">
    <property type="taxonomic scope" value="Eukaryota"/>
</dbReference>
<dbReference type="HOGENOM" id="CLU_061398_1_0_1"/>
<dbReference type="InParanoid" id="Q8JH55"/>
<dbReference type="OMA" id="SHAPYQH"/>
<dbReference type="OrthoDB" id="6159439at2759"/>
<dbReference type="PhylomeDB" id="Q8JH55"/>
<dbReference type="TreeFam" id="TF316310"/>
<dbReference type="PRO" id="PR:Q8JH55"/>
<dbReference type="Proteomes" id="UP000000437">
    <property type="component" value="Alternate scaffold 12"/>
</dbReference>
<dbReference type="Proteomes" id="UP000000437">
    <property type="component" value="Chromosome 12"/>
</dbReference>
<dbReference type="Bgee" id="ENSDARG00000054025">
    <property type="expression patterns" value="Expressed in embryo and 7 other cell types or tissues"/>
</dbReference>
<dbReference type="ExpressionAtlas" id="Q8JH55">
    <property type="expression patterns" value="baseline and differential"/>
</dbReference>
<dbReference type="GO" id="GO:0005634">
    <property type="term" value="C:nucleus"/>
    <property type="evidence" value="ECO:0000318"/>
    <property type="project" value="GO_Central"/>
</dbReference>
<dbReference type="GO" id="GO:0000981">
    <property type="term" value="F:DNA-binding transcription factor activity, RNA polymerase II-specific"/>
    <property type="evidence" value="ECO:0000318"/>
    <property type="project" value="GO_Central"/>
</dbReference>
<dbReference type="GO" id="GO:0000977">
    <property type="term" value="F:RNA polymerase II transcription regulatory region sequence-specific DNA binding"/>
    <property type="evidence" value="ECO:0000318"/>
    <property type="project" value="GO_Central"/>
</dbReference>
<dbReference type="GO" id="GO:0006357">
    <property type="term" value="P:regulation of transcription by RNA polymerase II"/>
    <property type="evidence" value="ECO:0000318"/>
    <property type="project" value="GO_Central"/>
</dbReference>
<dbReference type="CDD" id="cd00086">
    <property type="entry name" value="homeodomain"/>
    <property type="match status" value="1"/>
</dbReference>
<dbReference type="FunFam" id="1.10.10.60:FF:000072">
    <property type="entry name" value="Homeobox protein Hox-B8"/>
    <property type="match status" value="1"/>
</dbReference>
<dbReference type="Gene3D" id="1.10.10.60">
    <property type="entry name" value="Homeodomain-like"/>
    <property type="match status" value="1"/>
</dbReference>
<dbReference type="InterPro" id="IPR050948">
    <property type="entry name" value="Antp_homeobox_TF"/>
</dbReference>
<dbReference type="InterPro" id="IPR001356">
    <property type="entry name" value="HD"/>
</dbReference>
<dbReference type="InterPro" id="IPR020479">
    <property type="entry name" value="HD_metazoa"/>
</dbReference>
<dbReference type="InterPro" id="IPR001827">
    <property type="entry name" value="Homeobox_Antennapedia_CS"/>
</dbReference>
<dbReference type="InterPro" id="IPR017970">
    <property type="entry name" value="Homeobox_CS"/>
</dbReference>
<dbReference type="InterPro" id="IPR009057">
    <property type="entry name" value="Homeodomain-like_sf"/>
</dbReference>
<dbReference type="PANTHER" id="PTHR46166">
    <property type="entry name" value="HOMEOBOX DOMAIN-CONTAINING PROTEIN"/>
    <property type="match status" value="1"/>
</dbReference>
<dbReference type="PANTHER" id="PTHR46166:SF2">
    <property type="entry name" value="HOMEOBOX PROTEIN HOX-B8"/>
    <property type="match status" value="1"/>
</dbReference>
<dbReference type="Pfam" id="PF00046">
    <property type="entry name" value="Homeodomain"/>
    <property type="match status" value="1"/>
</dbReference>
<dbReference type="PRINTS" id="PR00024">
    <property type="entry name" value="HOMEOBOX"/>
</dbReference>
<dbReference type="SMART" id="SM00389">
    <property type="entry name" value="HOX"/>
    <property type="match status" value="1"/>
</dbReference>
<dbReference type="SUPFAM" id="SSF46689">
    <property type="entry name" value="Homeodomain-like"/>
    <property type="match status" value="1"/>
</dbReference>
<dbReference type="PROSITE" id="PS00032">
    <property type="entry name" value="ANTENNAPEDIA"/>
    <property type="match status" value="1"/>
</dbReference>
<dbReference type="PROSITE" id="PS00027">
    <property type="entry name" value="HOMEOBOX_1"/>
    <property type="match status" value="1"/>
</dbReference>
<dbReference type="PROSITE" id="PS50071">
    <property type="entry name" value="HOMEOBOX_2"/>
    <property type="match status" value="1"/>
</dbReference>
<protein>
    <recommendedName>
        <fullName>Homeobox protein Hox-B8b</fullName>
    </recommendedName>
    <alternativeName>
        <fullName>Homeobox protein Hox-A8</fullName>
    </alternativeName>
</protein>
<feature type="chain" id="PRO_0000200154" description="Homeobox protein Hox-B8b">
    <location>
        <begin position="1"/>
        <end position="247"/>
    </location>
</feature>
<feature type="DNA-binding region" description="Homeobox" evidence="2">
    <location>
        <begin position="145"/>
        <end position="204"/>
    </location>
</feature>
<feature type="region of interest" description="Disordered" evidence="3">
    <location>
        <begin position="201"/>
        <end position="247"/>
    </location>
</feature>
<feature type="short sequence motif" description="Antp-type hexapeptide">
    <location>
        <begin position="134"/>
        <end position="139"/>
    </location>
</feature>
<feature type="compositionally biased region" description="Basic and acidic residues" evidence="3">
    <location>
        <begin position="204"/>
        <end position="236"/>
    </location>
</feature>
<sequence>MSSYFVNSLFTKFKGGDSLRSNYYDCPSYTPDLGGRPSVLYGHNTGSAFQHAAQFPDFYHHGTSSFPHASYQQTPCAVAYPGDATGNILGQDGLQKQSFFGAPDSDFTQFGDCNLKVSGIRDDLESAEPCTAQLFPWMRPQATGRRRGRQTYSRYQTLELEKEFLFNPYLTRKRRIEVSHALALTERQVKIWFQNRRMKWKKEHNKDKFPSSKAEQEEIERERQEGSQVSEKHTSGEEDSEASSNSK</sequence>
<comment type="function">
    <text evidence="1">Sequence-specific transcription factor which is part of a developmental regulatory system that provides cells with specific positional identities on the anterior-posterior axis.</text>
</comment>
<comment type="subcellular location">
    <subcellularLocation>
        <location evidence="2">Nucleus</location>
    </subcellularLocation>
</comment>
<comment type="developmental stage">
    <text evidence="4">At the 10-somite stage, expressed strongly in the paraxial mesoderm with an anterior expression limit at somite 6. At the 20-somite stage, expressed in the developing CNS with an anterior expression limit adjacent to the somite 2/somite 3 boundary.</text>
</comment>
<comment type="similarity">
    <text evidence="5">Belongs to the Antp homeobox family.</text>
</comment>
<gene>
    <name type="primary">hoxb8b</name>
    <name type="synonym">hoxa8</name>
</gene>
<organism>
    <name type="scientific">Danio rerio</name>
    <name type="common">Zebrafish</name>
    <name type="synonym">Brachydanio rerio</name>
    <dbReference type="NCBI Taxonomy" id="7955"/>
    <lineage>
        <taxon>Eukaryota</taxon>
        <taxon>Metazoa</taxon>
        <taxon>Chordata</taxon>
        <taxon>Craniata</taxon>
        <taxon>Vertebrata</taxon>
        <taxon>Euteleostomi</taxon>
        <taxon>Actinopterygii</taxon>
        <taxon>Neopterygii</taxon>
        <taxon>Teleostei</taxon>
        <taxon>Ostariophysi</taxon>
        <taxon>Cypriniformes</taxon>
        <taxon>Danionidae</taxon>
        <taxon>Danioninae</taxon>
        <taxon>Danio</taxon>
    </lineage>
</organism>
<accession>Q8JH55</accession>
<accession>O57360</accession>
<accession>Q4PR94</accession>
<accession>Q9PWM1</accession>
<reference key="1">
    <citation type="journal article" date="2013" name="Nature">
        <title>The zebrafish reference genome sequence and its relationship to the human genome.</title>
        <authorList>
            <person name="Howe K."/>
            <person name="Clark M.D."/>
            <person name="Torroja C.F."/>
            <person name="Torrance J."/>
            <person name="Berthelot C."/>
            <person name="Muffato M."/>
            <person name="Collins J.E."/>
            <person name="Humphray S."/>
            <person name="McLaren K."/>
            <person name="Matthews L."/>
            <person name="McLaren S."/>
            <person name="Sealy I."/>
            <person name="Caccamo M."/>
            <person name="Churcher C."/>
            <person name="Scott C."/>
            <person name="Barrett J.C."/>
            <person name="Koch R."/>
            <person name="Rauch G.J."/>
            <person name="White S."/>
            <person name="Chow W."/>
            <person name="Kilian B."/>
            <person name="Quintais L.T."/>
            <person name="Guerra-Assuncao J.A."/>
            <person name="Zhou Y."/>
            <person name="Gu Y."/>
            <person name="Yen J."/>
            <person name="Vogel J.H."/>
            <person name="Eyre T."/>
            <person name="Redmond S."/>
            <person name="Banerjee R."/>
            <person name="Chi J."/>
            <person name="Fu B."/>
            <person name="Langley E."/>
            <person name="Maguire S.F."/>
            <person name="Laird G.K."/>
            <person name="Lloyd D."/>
            <person name="Kenyon E."/>
            <person name="Donaldson S."/>
            <person name="Sehra H."/>
            <person name="Almeida-King J."/>
            <person name="Loveland J."/>
            <person name="Trevanion S."/>
            <person name="Jones M."/>
            <person name="Quail M."/>
            <person name="Willey D."/>
            <person name="Hunt A."/>
            <person name="Burton J."/>
            <person name="Sims S."/>
            <person name="McLay K."/>
            <person name="Plumb B."/>
            <person name="Davis J."/>
            <person name="Clee C."/>
            <person name="Oliver K."/>
            <person name="Clark R."/>
            <person name="Riddle C."/>
            <person name="Elliot D."/>
            <person name="Threadgold G."/>
            <person name="Harden G."/>
            <person name="Ware D."/>
            <person name="Begum S."/>
            <person name="Mortimore B."/>
            <person name="Kerry G."/>
            <person name="Heath P."/>
            <person name="Phillimore B."/>
            <person name="Tracey A."/>
            <person name="Corby N."/>
            <person name="Dunn M."/>
            <person name="Johnson C."/>
            <person name="Wood J."/>
            <person name="Clark S."/>
            <person name="Pelan S."/>
            <person name="Griffiths G."/>
            <person name="Smith M."/>
            <person name="Glithero R."/>
            <person name="Howden P."/>
            <person name="Barker N."/>
            <person name="Lloyd C."/>
            <person name="Stevens C."/>
            <person name="Harley J."/>
            <person name="Holt K."/>
            <person name="Panagiotidis G."/>
            <person name="Lovell J."/>
            <person name="Beasley H."/>
            <person name="Henderson C."/>
            <person name="Gordon D."/>
            <person name="Auger K."/>
            <person name="Wright D."/>
            <person name="Collins J."/>
            <person name="Raisen C."/>
            <person name="Dyer L."/>
            <person name="Leung K."/>
            <person name="Robertson L."/>
            <person name="Ambridge K."/>
            <person name="Leongamornlert D."/>
            <person name="McGuire S."/>
            <person name="Gilderthorp R."/>
            <person name="Griffiths C."/>
            <person name="Manthravadi D."/>
            <person name="Nichol S."/>
            <person name="Barker G."/>
            <person name="Whitehead S."/>
            <person name="Kay M."/>
            <person name="Brown J."/>
            <person name="Murnane C."/>
            <person name="Gray E."/>
            <person name="Humphries M."/>
            <person name="Sycamore N."/>
            <person name="Barker D."/>
            <person name="Saunders D."/>
            <person name="Wallis J."/>
            <person name="Babbage A."/>
            <person name="Hammond S."/>
            <person name="Mashreghi-Mohammadi M."/>
            <person name="Barr L."/>
            <person name="Martin S."/>
            <person name="Wray P."/>
            <person name="Ellington A."/>
            <person name="Matthews N."/>
            <person name="Ellwood M."/>
            <person name="Woodmansey R."/>
            <person name="Clark G."/>
            <person name="Cooper J."/>
            <person name="Tromans A."/>
            <person name="Grafham D."/>
            <person name="Skuce C."/>
            <person name="Pandian R."/>
            <person name="Andrews R."/>
            <person name="Harrison E."/>
            <person name="Kimberley A."/>
            <person name="Garnett J."/>
            <person name="Fosker N."/>
            <person name="Hall R."/>
            <person name="Garner P."/>
            <person name="Kelly D."/>
            <person name="Bird C."/>
            <person name="Palmer S."/>
            <person name="Gehring I."/>
            <person name="Berger A."/>
            <person name="Dooley C.M."/>
            <person name="Ersan-Urun Z."/>
            <person name="Eser C."/>
            <person name="Geiger H."/>
            <person name="Geisler M."/>
            <person name="Karotki L."/>
            <person name="Kirn A."/>
            <person name="Konantz J."/>
            <person name="Konantz M."/>
            <person name="Oberlander M."/>
            <person name="Rudolph-Geiger S."/>
            <person name="Teucke M."/>
            <person name="Lanz C."/>
            <person name="Raddatz G."/>
            <person name="Osoegawa K."/>
            <person name="Zhu B."/>
            <person name="Rapp A."/>
            <person name="Widaa S."/>
            <person name="Langford C."/>
            <person name="Yang F."/>
            <person name="Schuster S.C."/>
            <person name="Carter N.P."/>
            <person name="Harrow J."/>
            <person name="Ning Z."/>
            <person name="Herrero J."/>
            <person name="Searle S.M."/>
            <person name="Enright A."/>
            <person name="Geisler R."/>
            <person name="Plasterk R.H."/>
            <person name="Lee C."/>
            <person name="Westerfield M."/>
            <person name="de Jong P.J."/>
            <person name="Zon L.I."/>
            <person name="Postlethwait J.H."/>
            <person name="Nusslein-Volhard C."/>
            <person name="Hubbard T.J."/>
            <person name="Roest Crollius H."/>
            <person name="Rogers J."/>
            <person name="Stemple D.L."/>
        </authorList>
    </citation>
    <scope>NUCLEOTIDE SEQUENCE [LARGE SCALE GENOMIC DNA]</scope>
    <source>
        <strain>Tuebingen</strain>
    </source>
</reference>
<reference key="2">
    <citation type="journal article" date="2005" name="Evol. Dev.">
        <title>Genomic annotation and transcriptome analysis of the zebrafish (Danio rerio) hox complex with description of a novel member, hoxb13a.</title>
        <authorList>
            <person name="Corredor-Adamez M."/>
            <person name="Welten M.C.M."/>
            <person name="Spaink H.P."/>
            <person name="Jeffery J.E."/>
            <person name="Schoon R.T."/>
            <person name="de Bakker M.A.G."/>
            <person name="Bagowski C.P."/>
            <person name="Meijer A.H."/>
            <person name="Verbeek F.J."/>
            <person name="Richardson M.K."/>
        </authorList>
    </citation>
    <scope>NUCLEOTIDE SEQUENCE [MRNA] OF 49-152</scope>
    <source>
        <strain>Tuebingen</strain>
    </source>
</reference>
<reference key="3">
    <citation type="journal article" date="1998" name="Science">
        <title>Zebrafish hox clusters and vertebrate genome evolution.</title>
        <authorList>
            <person name="Amores A."/>
            <person name="Force A."/>
            <person name="Yan Y.-L."/>
            <person name="Joly L."/>
            <person name="Amemiya C."/>
            <person name="Fritz A."/>
            <person name="Ho R.K."/>
            <person name="Langeland J."/>
            <person name="Prince V.E."/>
            <person name="Wang Y.-L."/>
            <person name="Westerfield M."/>
            <person name="Ekker M."/>
            <person name="Postlethwait J.H."/>
        </authorList>
    </citation>
    <scope>NUCLEOTIDE SEQUENCE [GENOMIC DNA] OF 144-247</scope>
</reference>
<reference key="4">
    <citation type="journal article" date="1998" name="Development">
        <title>Zebrafish hox genes: genomic organization and modified colinear expression patterns in the trunk.</title>
        <authorList>
            <person name="Prince V.E."/>
            <person name="Joly L."/>
            <person name="Ekker M."/>
            <person name="Ho R.K."/>
        </authorList>
    </citation>
    <scope>NUCLEOTIDE SEQUENCE [MRNA] OF 162-247</scope>
    <scope>DEVELOPMENTAL STAGE</scope>
    <source>
        <tissue>Embryo</tissue>
    </source>
</reference>
<name>HXB8B_DANRE</name>